<name>COAE_PRB01</name>
<protein>
    <recommendedName>
        <fullName evidence="1">Dephospho-CoA kinase</fullName>
        <ecNumber evidence="1">2.7.1.24</ecNumber>
    </recommendedName>
    <alternativeName>
        <fullName evidence="1">Dephosphocoenzyme A kinase</fullName>
    </alternativeName>
</protein>
<proteinExistence type="inferred from homology"/>
<comment type="function">
    <text evidence="1">Catalyzes the phosphorylation of the 3'-hydroxyl group of dephosphocoenzyme A to form coenzyme A.</text>
</comment>
<comment type="catalytic activity">
    <reaction evidence="1">
        <text>3'-dephospho-CoA + ATP = ADP + CoA + H(+)</text>
        <dbReference type="Rhea" id="RHEA:18245"/>
        <dbReference type="ChEBI" id="CHEBI:15378"/>
        <dbReference type="ChEBI" id="CHEBI:30616"/>
        <dbReference type="ChEBI" id="CHEBI:57287"/>
        <dbReference type="ChEBI" id="CHEBI:57328"/>
        <dbReference type="ChEBI" id="CHEBI:456216"/>
        <dbReference type="EC" id="2.7.1.24"/>
    </reaction>
</comment>
<comment type="pathway">
    <text evidence="1">Cofactor biosynthesis; coenzyme A biosynthesis; CoA from (R)-pantothenate: step 5/5.</text>
</comment>
<comment type="subcellular location">
    <subcellularLocation>
        <location evidence="1">Cytoplasm</location>
    </subcellularLocation>
</comment>
<comment type="similarity">
    <text evidence="1">Belongs to the CoaE family.</text>
</comment>
<sequence>MIIGLTGGIGSGKSAAADFFIDLGISVLDADQVAKEALSTNSPGYTDFISQFGEVYLNNNREVDRLKLRELIFSNPSKKKDLENIIHPIVRSAISNFIITSTSPYSIVMVPLIFETNSYKNYDKIITVDCDLELQIVRASSRDAQNKSQIKNIINKQASREERLSISDDVLINNSTLSDLKKQVNVLHTKYMELLNE</sequence>
<organism>
    <name type="scientific">Gamma-proteobacterium EBAC31A08</name>
    <dbReference type="NCBI Taxonomy" id="133804"/>
    <lineage>
        <taxon>Bacteria</taxon>
        <taxon>Pseudomonadati</taxon>
        <taxon>Pseudomonadota</taxon>
        <taxon>Gammaproteobacteria</taxon>
        <taxon>environmental samples</taxon>
    </lineage>
</organism>
<keyword id="KW-0067">ATP-binding</keyword>
<keyword id="KW-0173">Coenzyme A biosynthesis</keyword>
<keyword id="KW-0963">Cytoplasm</keyword>
<keyword id="KW-0418">Kinase</keyword>
<keyword id="KW-0547">Nucleotide-binding</keyword>
<keyword id="KW-0808">Transferase</keyword>
<feature type="chain" id="PRO_0000172976" description="Dephospho-CoA kinase">
    <location>
        <begin position="1"/>
        <end position="197"/>
    </location>
</feature>
<feature type="domain" description="DPCK" evidence="1">
    <location>
        <begin position="2"/>
        <end position="197"/>
    </location>
</feature>
<feature type="binding site" evidence="1">
    <location>
        <begin position="10"/>
        <end position="15"/>
    </location>
    <ligand>
        <name>ATP</name>
        <dbReference type="ChEBI" id="CHEBI:30616"/>
    </ligand>
</feature>
<evidence type="ECO:0000255" key="1">
    <source>
        <dbReference type="HAMAP-Rule" id="MF_00376"/>
    </source>
</evidence>
<dbReference type="EC" id="2.7.1.24" evidence="1"/>
<dbReference type="EMBL" id="AF279106">
    <property type="protein sequence ID" value="AAG10504.1"/>
    <property type="molecule type" value="Genomic_DNA"/>
</dbReference>
<dbReference type="SMR" id="Q9F7L5"/>
<dbReference type="UniPathway" id="UPA00241">
    <property type="reaction ID" value="UER00356"/>
</dbReference>
<dbReference type="GO" id="GO:0005737">
    <property type="term" value="C:cytoplasm"/>
    <property type="evidence" value="ECO:0007669"/>
    <property type="project" value="UniProtKB-SubCell"/>
</dbReference>
<dbReference type="GO" id="GO:0005524">
    <property type="term" value="F:ATP binding"/>
    <property type="evidence" value="ECO:0007669"/>
    <property type="project" value="UniProtKB-UniRule"/>
</dbReference>
<dbReference type="GO" id="GO:0004140">
    <property type="term" value="F:dephospho-CoA kinase activity"/>
    <property type="evidence" value="ECO:0007669"/>
    <property type="project" value="UniProtKB-UniRule"/>
</dbReference>
<dbReference type="GO" id="GO:0015937">
    <property type="term" value="P:coenzyme A biosynthetic process"/>
    <property type="evidence" value="ECO:0007669"/>
    <property type="project" value="UniProtKB-UniRule"/>
</dbReference>
<dbReference type="CDD" id="cd02022">
    <property type="entry name" value="DPCK"/>
    <property type="match status" value="1"/>
</dbReference>
<dbReference type="Gene3D" id="3.40.50.300">
    <property type="entry name" value="P-loop containing nucleotide triphosphate hydrolases"/>
    <property type="match status" value="1"/>
</dbReference>
<dbReference type="HAMAP" id="MF_00376">
    <property type="entry name" value="Dephospho_CoA_kinase"/>
    <property type="match status" value="1"/>
</dbReference>
<dbReference type="InterPro" id="IPR001977">
    <property type="entry name" value="Depp_CoAkinase"/>
</dbReference>
<dbReference type="InterPro" id="IPR027417">
    <property type="entry name" value="P-loop_NTPase"/>
</dbReference>
<dbReference type="NCBIfam" id="TIGR00152">
    <property type="entry name" value="dephospho-CoA kinase"/>
    <property type="match status" value="1"/>
</dbReference>
<dbReference type="PANTHER" id="PTHR10695:SF46">
    <property type="entry name" value="BIFUNCTIONAL COENZYME A SYNTHASE-RELATED"/>
    <property type="match status" value="1"/>
</dbReference>
<dbReference type="PANTHER" id="PTHR10695">
    <property type="entry name" value="DEPHOSPHO-COA KINASE-RELATED"/>
    <property type="match status" value="1"/>
</dbReference>
<dbReference type="Pfam" id="PF01121">
    <property type="entry name" value="CoaE"/>
    <property type="match status" value="1"/>
</dbReference>
<dbReference type="SUPFAM" id="SSF52540">
    <property type="entry name" value="P-loop containing nucleoside triphosphate hydrolases"/>
    <property type="match status" value="1"/>
</dbReference>
<dbReference type="PROSITE" id="PS51219">
    <property type="entry name" value="DPCK"/>
    <property type="match status" value="1"/>
</dbReference>
<gene>
    <name evidence="1" type="primary">coaE</name>
</gene>
<reference key="1">
    <citation type="journal article" date="2000" name="Science">
        <title>Bacterial rhodopsin: evidence for a new type of phototrophy in the sea.</title>
        <authorList>
            <person name="Beja O."/>
            <person name="Aravind L."/>
            <person name="Koonin E.V."/>
            <person name="Suzuki M.T."/>
            <person name="Hadd A."/>
            <person name="Nguyen L.P."/>
            <person name="Jovanovich S.B."/>
            <person name="Gates C.M."/>
            <person name="Feldman R.A."/>
            <person name="Spudich J.L."/>
            <person name="Spudich E.N."/>
            <person name="DeLong E.F."/>
        </authorList>
    </citation>
    <scope>NUCLEOTIDE SEQUENCE [GENOMIC DNA]</scope>
</reference>
<accession>Q9F7L5</accession>